<evidence type="ECO:0000250" key="1"/>
<evidence type="ECO:0000255" key="2"/>
<evidence type="ECO:0000256" key="3">
    <source>
        <dbReference type="SAM" id="MobiDB-lite"/>
    </source>
</evidence>
<evidence type="ECO:0000269" key="4">
    <source>
    </source>
</evidence>
<evidence type="ECO:0000269" key="5">
    <source>
    </source>
</evidence>
<evidence type="ECO:0000305" key="6"/>
<evidence type="ECO:0000305" key="7">
    <source>
    </source>
</evidence>
<comment type="function">
    <text evidence="1 4">Microtubule-binding protein required to ensure proper cell division and nuclear envelope reassembly by sequestering the endoplasmic reticulum away from chromosomes during mitosis. Probably acts by clearing the endoplasmic reticulum membrane from metaphase chromosomes (By similarity). May play a role in the maintenance of both the nervous system and the musculature.</text>
</comment>
<comment type="subunit">
    <text evidence="5">Interacts with microtubules.</text>
</comment>
<comment type="subcellular location">
    <subcellularLocation>
        <location evidence="1">Endoplasmic reticulum membrane</location>
        <topology evidence="1">Multi-pass membrane protein</topology>
    </subcellularLocation>
</comment>
<comment type="tissue specificity">
    <text evidence="4">During gastrulation, expressed on the dorsal side of the embryo and then in the neural plate and neural tube. At tailbud stages, expressed in the somites, neural tube and otic vesicle.</text>
</comment>
<comment type="developmental stage">
    <text evidence="4">Expressed maternally and zygotically. Maternal expression declines during cleavage stages and gastrulation. Expression then increases during neurula and tailbud stages.</text>
</comment>
<comment type="miscellaneous">
    <text evidence="7">Inactivation in embryos by antisense morpholino causes paralysis and shortening of the body axis.</text>
</comment>
<comment type="similarity">
    <text evidence="6">Belongs to the DP1 family.</text>
</comment>
<name>REEP4_XENLA</name>
<protein>
    <recommendedName>
        <fullName>Receptor expression-enhancing protein 4</fullName>
    </recommendedName>
</protein>
<dbReference type="EMBL" id="BC077625">
    <property type="protein sequence ID" value="AAH77625.1"/>
    <property type="molecule type" value="mRNA"/>
</dbReference>
<dbReference type="RefSeq" id="NP_001086898.1">
    <property type="nucleotide sequence ID" value="NM_001093429.1"/>
</dbReference>
<dbReference type="DNASU" id="446733"/>
<dbReference type="GeneID" id="446733"/>
<dbReference type="KEGG" id="xla:446733"/>
<dbReference type="AGR" id="Xenbase:XB-GENE-982265"/>
<dbReference type="CTD" id="446733"/>
<dbReference type="Xenbase" id="XB-GENE-982265">
    <property type="gene designation" value="reep4.S"/>
</dbReference>
<dbReference type="OMA" id="MISRIMV"/>
<dbReference type="OrthoDB" id="434647at2759"/>
<dbReference type="Proteomes" id="UP000186698">
    <property type="component" value="Chromosome 3S"/>
</dbReference>
<dbReference type="Bgee" id="446733">
    <property type="expression patterns" value="Expressed in egg cell and 19 other cell types or tissues"/>
</dbReference>
<dbReference type="GO" id="GO:0005881">
    <property type="term" value="C:cytoplasmic microtubule"/>
    <property type="evidence" value="ECO:0000318"/>
    <property type="project" value="GO_Central"/>
</dbReference>
<dbReference type="GO" id="GO:0005783">
    <property type="term" value="C:endoplasmic reticulum"/>
    <property type="evidence" value="ECO:0000250"/>
    <property type="project" value="UniProtKB"/>
</dbReference>
<dbReference type="GO" id="GO:0005789">
    <property type="term" value="C:endoplasmic reticulum membrane"/>
    <property type="evidence" value="ECO:0000318"/>
    <property type="project" value="GO_Central"/>
</dbReference>
<dbReference type="GO" id="GO:0071782">
    <property type="term" value="C:endoplasmic reticulum tubular network"/>
    <property type="evidence" value="ECO:0000318"/>
    <property type="project" value="GO_Central"/>
</dbReference>
<dbReference type="GO" id="GO:0008017">
    <property type="term" value="F:microtubule binding"/>
    <property type="evidence" value="ECO:0000314"/>
    <property type="project" value="UniProtKB"/>
</dbReference>
<dbReference type="GO" id="GO:0051301">
    <property type="term" value="P:cell division"/>
    <property type="evidence" value="ECO:0007669"/>
    <property type="project" value="UniProtKB-KW"/>
</dbReference>
<dbReference type="GO" id="GO:0071786">
    <property type="term" value="P:endoplasmic reticulum tubular network organization"/>
    <property type="evidence" value="ECO:0000318"/>
    <property type="project" value="GO_Central"/>
</dbReference>
<dbReference type="GO" id="GO:0007084">
    <property type="term" value="P:mitotic nuclear membrane reassembly"/>
    <property type="evidence" value="ECO:0000250"/>
    <property type="project" value="UniProtKB"/>
</dbReference>
<dbReference type="GO" id="GO:0006998">
    <property type="term" value="P:nuclear envelope organization"/>
    <property type="evidence" value="ECO:0000250"/>
    <property type="project" value="UniProtKB"/>
</dbReference>
<dbReference type="InterPro" id="IPR004345">
    <property type="entry name" value="TB2_DP1_HVA22"/>
</dbReference>
<dbReference type="PANTHER" id="PTHR12300">
    <property type="entry name" value="HVA22-LIKE PROTEINS"/>
    <property type="match status" value="1"/>
</dbReference>
<dbReference type="PANTHER" id="PTHR12300:SF36">
    <property type="entry name" value="RECEPTOR EXPRESSION-ENHANCING PROTEIN 4"/>
    <property type="match status" value="1"/>
</dbReference>
<dbReference type="Pfam" id="PF03134">
    <property type="entry name" value="TB2_DP1_HVA22"/>
    <property type="match status" value="1"/>
</dbReference>
<reference key="1">
    <citation type="submission" date="2004-07" db="EMBL/GenBank/DDBJ databases">
        <authorList>
            <consortium name="NIH - Xenopus Gene Collection (XGC) project"/>
        </authorList>
    </citation>
    <scope>NUCLEOTIDE SEQUENCE [LARGE SCALE MRNA]</scope>
    <source>
        <tissue>Oocyte</tissue>
    </source>
</reference>
<reference key="2">
    <citation type="journal article" date="2009" name="Int. J. Dev. Biol.">
        <title>Loss of REEP4 causes paralysis of the Xenopus embryo.</title>
        <authorList>
            <person name="Argasinska J."/>
            <person name="Rana A.A."/>
            <person name="Gilchrist M.J."/>
            <person name="Lachani K."/>
            <person name="Young A."/>
            <person name="Smith J.C."/>
        </authorList>
    </citation>
    <scope>FUNCTION</scope>
    <scope>TISSUE SPECIFICITY</scope>
    <scope>DEVELOPMENTAL STAGE</scope>
</reference>
<reference key="3">
    <citation type="journal article" date="2013" name="Dev. Cell">
        <title>REEP3/4 ensure endoplasmic reticulum clearance from metaphase chromatin and proper nuclear envelope architecture.</title>
        <authorList>
            <person name="Schlaitz A.L."/>
            <person name="Thompson J."/>
            <person name="Wong C.C."/>
            <person name="Yates J.R. III"/>
            <person name="Heald R."/>
        </authorList>
    </citation>
    <scope>INTERACTION WITH MICROTUBULES</scope>
    <scope>IDENTIFICATION BY MASS SPECTROMETRY</scope>
</reference>
<sequence length="261" mass="29821">MVSWIISRAVVLVFGLLYPAYASYKAVKTKNVRDYVRWMMYWIVFALFMTVETFTDIFIAWFPFYYEIKMAFVVWLLSPYTRGASLLYRKCIHPTLSLKEKEIDSYIIQAKERSYESFVNIGRKGLNIAASAAVQAATKGQGALVGRLRSFSMQDLRALPDDTPIHYTDALYPDEPQLHRRPMGFPTTSQADSDSMDERWSDSEIAETRTAARTRGGMPSKSLQRSQSLRVSKKKGLSREVSTKTTKPRAKKKPAQSEPEN</sequence>
<keyword id="KW-0131">Cell cycle</keyword>
<keyword id="KW-0132">Cell division</keyword>
<keyword id="KW-0256">Endoplasmic reticulum</keyword>
<keyword id="KW-0472">Membrane</keyword>
<keyword id="KW-0493">Microtubule</keyword>
<keyword id="KW-0498">Mitosis</keyword>
<keyword id="KW-1185">Reference proteome</keyword>
<keyword id="KW-0812">Transmembrane</keyword>
<keyword id="KW-1133">Transmembrane helix</keyword>
<proteinExistence type="evidence at protein level"/>
<accession>Q6AZM3</accession>
<gene>
    <name type="primary">reep4</name>
</gene>
<feature type="chain" id="PRO_0000424023" description="Receptor expression-enhancing protein 4">
    <location>
        <begin position="1"/>
        <end position="261"/>
    </location>
</feature>
<feature type="transmembrane region" description="Helical" evidence="2">
    <location>
        <begin position="1"/>
        <end position="21"/>
    </location>
</feature>
<feature type="transmembrane region" description="Helical" evidence="2">
    <location>
        <begin position="35"/>
        <end position="55"/>
    </location>
</feature>
<feature type="region of interest" description="Disordered" evidence="3">
    <location>
        <begin position="167"/>
        <end position="261"/>
    </location>
</feature>
<feature type="compositionally biased region" description="Polar residues" evidence="3">
    <location>
        <begin position="221"/>
        <end position="230"/>
    </location>
</feature>
<organism>
    <name type="scientific">Xenopus laevis</name>
    <name type="common">African clawed frog</name>
    <dbReference type="NCBI Taxonomy" id="8355"/>
    <lineage>
        <taxon>Eukaryota</taxon>
        <taxon>Metazoa</taxon>
        <taxon>Chordata</taxon>
        <taxon>Craniata</taxon>
        <taxon>Vertebrata</taxon>
        <taxon>Euteleostomi</taxon>
        <taxon>Amphibia</taxon>
        <taxon>Batrachia</taxon>
        <taxon>Anura</taxon>
        <taxon>Pipoidea</taxon>
        <taxon>Pipidae</taxon>
        <taxon>Xenopodinae</taxon>
        <taxon>Xenopus</taxon>
        <taxon>Xenopus</taxon>
    </lineage>
</organism>